<name>UPP_PSEPF</name>
<protein>
    <recommendedName>
        <fullName evidence="1">Uracil phosphoribosyltransferase</fullName>
        <ecNumber evidence="1">2.4.2.9</ecNumber>
    </recommendedName>
    <alternativeName>
        <fullName evidence="1">UMP pyrophosphorylase</fullName>
    </alternativeName>
    <alternativeName>
        <fullName evidence="1">UPRTase</fullName>
    </alternativeName>
</protein>
<dbReference type="EC" id="2.4.2.9" evidence="1"/>
<dbReference type="EMBL" id="CP000094">
    <property type="protein sequence ID" value="ABA76465.1"/>
    <property type="molecule type" value="Genomic_DNA"/>
</dbReference>
<dbReference type="RefSeq" id="WP_011335903.1">
    <property type="nucleotide sequence ID" value="NC_007492.2"/>
</dbReference>
<dbReference type="SMR" id="Q3K6Y9"/>
<dbReference type="KEGG" id="pfo:Pfl01_4728"/>
<dbReference type="eggNOG" id="COG0035">
    <property type="taxonomic scope" value="Bacteria"/>
</dbReference>
<dbReference type="HOGENOM" id="CLU_067096_2_2_6"/>
<dbReference type="UniPathway" id="UPA00574">
    <property type="reaction ID" value="UER00636"/>
</dbReference>
<dbReference type="Proteomes" id="UP000002704">
    <property type="component" value="Chromosome"/>
</dbReference>
<dbReference type="GO" id="GO:0005525">
    <property type="term" value="F:GTP binding"/>
    <property type="evidence" value="ECO:0007669"/>
    <property type="project" value="UniProtKB-KW"/>
</dbReference>
<dbReference type="GO" id="GO:0000287">
    <property type="term" value="F:magnesium ion binding"/>
    <property type="evidence" value="ECO:0007669"/>
    <property type="project" value="UniProtKB-UniRule"/>
</dbReference>
<dbReference type="GO" id="GO:0004845">
    <property type="term" value="F:uracil phosphoribosyltransferase activity"/>
    <property type="evidence" value="ECO:0007669"/>
    <property type="project" value="UniProtKB-UniRule"/>
</dbReference>
<dbReference type="GO" id="GO:0044206">
    <property type="term" value="P:UMP salvage"/>
    <property type="evidence" value="ECO:0007669"/>
    <property type="project" value="UniProtKB-UniRule"/>
</dbReference>
<dbReference type="GO" id="GO:0006223">
    <property type="term" value="P:uracil salvage"/>
    <property type="evidence" value="ECO:0007669"/>
    <property type="project" value="InterPro"/>
</dbReference>
<dbReference type="CDD" id="cd06223">
    <property type="entry name" value="PRTases_typeI"/>
    <property type="match status" value="1"/>
</dbReference>
<dbReference type="FunFam" id="3.40.50.2020:FF:000003">
    <property type="entry name" value="Uracil phosphoribosyltransferase"/>
    <property type="match status" value="1"/>
</dbReference>
<dbReference type="Gene3D" id="3.40.50.2020">
    <property type="match status" value="1"/>
</dbReference>
<dbReference type="HAMAP" id="MF_01218_B">
    <property type="entry name" value="Upp_B"/>
    <property type="match status" value="1"/>
</dbReference>
<dbReference type="InterPro" id="IPR000836">
    <property type="entry name" value="PRibTrfase_dom"/>
</dbReference>
<dbReference type="InterPro" id="IPR029057">
    <property type="entry name" value="PRTase-like"/>
</dbReference>
<dbReference type="InterPro" id="IPR034332">
    <property type="entry name" value="Upp_B"/>
</dbReference>
<dbReference type="InterPro" id="IPR050054">
    <property type="entry name" value="UPRTase/APRTase"/>
</dbReference>
<dbReference type="InterPro" id="IPR005765">
    <property type="entry name" value="Ura_phspho_trans"/>
</dbReference>
<dbReference type="NCBIfam" id="NF001097">
    <property type="entry name" value="PRK00129.1"/>
    <property type="match status" value="1"/>
</dbReference>
<dbReference type="NCBIfam" id="TIGR01091">
    <property type="entry name" value="upp"/>
    <property type="match status" value="1"/>
</dbReference>
<dbReference type="PANTHER" id="PTHR32315">
    <property type="entry name" value="ADENINE PHOSPHORIBOSYLTRANSFERASE"/>
    <property type="match status" value="1"/>
</dbReference>
<dbReference type="PANTHER" id="PTHR32315:SF4">
    <property type="entry name" value="URACIL PHOSPHORIBOSYLTRANSFERASE, CHLOROPLASTIC"/>
    <property type="match status" value="1"/>
</dbReference>
<dbReference type="Pfam" id="PF14681">
    <property type="entry name" value="UPRTase"/>
    <property type="match status" value="1"/>
</dbReference>
<dbReference type="SUPFAM" id="SSF53271">
    <property type="entry name" value="PRTase-like"/>
    <property type="match status" value="1"/>
</dbReference>
<organism>
    <name type="scientific">Pseudomonas fluorescens (strain Pf0-1)</name>
    <dbReference type="NCBI Taxonomy" id="205922"/>
    <lineage>
        <taxon>Bacteria</taxon>
        <taxon>Pseudomonadati</taxon>
        <taxon>Pseudomonadota</taxon>
        <taxon>Gammaproteobacteria</taxon>
        <taxon>Pseudomonadales</taxon>
        <taxon>Pseudomonadaceae</taxon>
        <taxon>Pseudomonas</taxon>
    </lineage>
</organism>
<feature type="chain" id="PRO_1000053766" description="Uracil phosphoribosyltransferase">
    <location>
        <begin position="1"/>
        <end position="212"/>
    </location>
</feature>
<feature type="binding site" evidence="1">
    <location>
        <position position="78"/>
    </location>
    <ligand>
        <name>5-phospho-alpha-D-ribose 1-diphosphate</name>
        <dbReference type="ChEBI" id="CHEBI:58017"/>
    </ligand>
</feature>
<feature type="binding site" evidence="1">
    <location>
        <position position="103"/>
    </location>
    <ligand>
        <name>5-phospho-alpha-D-ribose 1-diphosphate</name>
        <dbReference type="ChEBI" id="CHEBI:58017"/>
    </ligand>
</feature>
<feature type="binding site" evidence="1">
    <location>
        <begin position="130"/>
        <end position="138"/>
    </location>
    <ligand>
        <name>5-phospho-alpha-D-ribose 1-diphosphate</name>
        <dbReference type="ChEBI" id="CHEBI:58017"/>
    </ligand>
</feature>
<feature type="binding site" evidence="1">
    <location>
        <position position="193"/>
    </location>
    <ligand>
        <name>uracil</name>
        <dbReference type="ChEBI" id="CHEBI:17568"/>
    </ligand>
</feature>
<feature type="binding site" evidence="1">
    <location>
        <begin position="198"/>
        <end position="200"/>
    </location>
    <ligand>
        <name>uracil</name>
        <dbReference type="ChEBI" id="CHEBI:17568"/>
    </ligand>
</feature>
<feature type="binding site" evidence="1">
    <location>
        <position position="199"/>
    </location>
    <ligand>
        <name>5-phospho-alpha-D-ribose 1-diphosphate</name>
        <dbReference type="ChEBI" id="CHEBI:58017"/>
    </ligand>
</feature>
<accession>Q3K6Y9</accession>
<reference key="1">
    <citation type="journal article" date="2009" name="Genome Biol.">
        <title>Genomic and genetic analyses of diversity and plant interactions of Pseudomonas fluorescens.</title>
        <authorList>
            <person name="Silby M.W."/>
            <person name="Cerdeno-Tarraga A.M."/>
            <person name="Vernikos G.S."/>
            <person name="Giddens S.R."/>
            <person name="Jackson R.W."/>
            <person name="Preston G.M."/>
            <person name="Zhang X.-X."/>
            <person name="Moon C.D."/>
            <person name="Gehrig S.M."/>
            <person name="Godfrey S.A.C."/>
            <person name="Knight C.G."/>
            <person name="Malone J.G."/>
            <person name="Robinson Z."/>
            <person name="Spiers A.J."/>
            <person name="Harris S."/>
            <person name="Challis G.L."/>
            <person name="Yaxley A.M."/>
            <person name="Harris D."/>
            <person name="Seeger K."/>
            <person name="Murphy L."/>
            <person name="Rutter S."/>
            <person name="Squares R."/>
            <person name="Quail M.A."/>
            <person name="Saunders E."/>
            <person name="Mavromatis K."/>
            <person name="Brettin T.S."/>
            <person name="Bentley S.D."/>
            <person name="Hothersall J."/>
            <person name="Stephens E."/>
            <person name="Thomas C.M."/>
            <person name="Parkhill J."/>
            <person name="Levy S.B."/>
            <person name="Rainey P.B."/>
            <person name="Thomson N.R."/>
        </authorList>
    </citation>
    <scope>NUCLEOTIDE SEQUENCE [LARGE SCALE GENOMIC DNA]</scope>
    <source>
        <strain>Pf0-1</strain>
    </source>
</reference>
<keyword id="KW-0021">Allosteric enzyme</keyword>
<keyword id="KW-0328">Glycosyltransferase</keyword>
<keyword id="KW-0342">GTP-binding</keyword>
<keyword id="KW-0460">Magnesium</keyword>
<keyword id="KW-0547">Nucleotide-binding</keyword>
<keyword id="KW-0808">Transferase</keyword>
<sequence>MSIQEIRHPLIRHKLGLMRRADISTKNFRELAQEVGALLTYEATKDLPLETYDIEGWCGTVSVEKIAGKKITVVPILRAGIGMLEGVLSLIPGAKVSAVGVARNEETLQAHTYLEKLVPEIDERLAMIIDPMLATGSSMVATIDLLKKAGCKDIRAMVLVAAPEGIAAVEQAHPDVIIYTASIDQKLNEHGYIIPGLGDAGDKIFGTKQKDA</sequence>
<proteinExistence type="inferred from homology"/>
<gene>
    <name evidence="1" type="primary">upp</name>
    <name type="ordered locus">Pfl01_4728</name>
</gene>
<evidence type="ECO:0000255" key="1">
    <source>
        <dbReference type="HAMAP-Rule" id="MF_01218"/>
    </source>
</evidence>
<comment type="function">
    <text evidence="1">Catalyzes the conversion of uracil and 5-phospho-alpha-D-ribose 1-diphosphate (PRPP) to UMP and diphosphate.</text>
</comment>
<comment type="catalytic activity">
    <reaction evidence="1">
        <text>UMP + diphosphate = 5-phospho-alpha-D-ribose 1-diphosphate + uracil</text>
        <dbReference type="Rhea" id="RHEA:13017"/>
        <dbReference type="ChEBI" id="CHEBI:17568"/>
        <dbReference type="ChEBI" id="CHEBI:33019"/>
        <dbReference type="ChEBI" id="CHEBI:57865"/>
        <dbReference type="ChEBI" id="CHEBI:58017"/>
        <dbReference type="EC" id="2.4.2.9"/>
    </reaction>
</comment>
<comment type="cofactor">
    <cofactor evidence="1">
        <name>Mg(2+)</name>
        <dbReference type="ChEBI" id="CHEBI:18420"/>
    </cofactor>
    <text evidence="1">Binds 1 Mg(2+) ion per subunit. The magnesium is bound as Mg-PRPP.</text>
</comment>
<comment type="activity regulation">
    <text evidence="1">Allosterically activated by GTP.</text>
</comment>
<comment type="pathway">
    <text evidence="1">Pyrimidine metabolism; UMP biosynthesis via salvage pathway; UMP from uracil: step 1/1.</text>
</comment>
<comment type="similarity">
    <text evidence="1">Belongs to the UPRTase family.</text>
</comment>